<name>DNLJ_SALTO</name>
<sequence length="711" mass="76364">MSEDAIGQQVPAAQEAAAGAEPNSAARERHATLSRELTEHQYRYYVLDAPTISDAAFDEQLRELAALEAEFPALRTPDSPTQRVGGAFSTDFTPVAHAERMMSLDNAFSDEELAAWAERVERDAGGPVPYLCELKVDGLAINLTYERGRLVRAATRGDGRTGEDVTANVRSIQDVPGELTPSAEFPEIPDLLEVRGEIYFPVAGFADLNAGLVEQGRAPFANPRNAAAGSLRQKDPRITASRPLRLVVHGFGARRGWAPSTQSESYAALRTWGLPTSDRWRVVPGLAGVAEYVAHYAAHRHDVEHEIDGVVVKVDPVAIQGRLGSTSRAPRWAIAFKYPPEEVNTRLLDIDVNVGRTGRVTPFAVLEPVRVAGSTVALATLHNAREVERKGVLIGDTVVIRKAGDVIPEVLGPVVELRPPEARSFVMPSRCPCCGTPLAPAKEGDIDIRCPNTRSCPAQLRERVFHLAGRGAFDIEVLGYKGAAALLDAEIITDEGDLFTLDTAQLARSPFFVNKDGSLGSNAVKLLENLTVAKERELWRVLVALSIRHVGPTAAQALARHFRSVEAIDQAGEEELSAVDGVGPTIAASVREWFAVAWHREVVRKWAEAGVRMAEEAVAQGPRPLEGVTVVVTGTLAGYSRDQAAEAIQSRGGKVTGSVSKKTAFVVVGDNPGTKAEKAAGLKVPVLDEEGFQVLLDAGPEAARAVARVEG</sequence>
<keyword id="KW-0227">DNA damage</keyword>
<keyword id="KW-0234">DNA repair</keyword>
<keyword id="KW-0235">DNA replication</keyword>
<keyword id="KW-0436">Ligase</keyword>
<keyword id="KW-0460">Magnesium</keyword>
<keyword id="KW-0464">Manganese</keyword>
<keyword id="KW-0479">Metal-binding</keyword>
<keyword id="KW-0520">NAD</keyword>
<keyword id="KW-1185">Reference proteome</keyword>
<keyword id="KW-0862">Zinc</keyword>
<accession>A4X487</accession>
<dbReference type="EC" id="6.5.1.2" evidence="1"/>
<dbReference type="EMBL" id="CP000667">
    <property type="protein sequence ID" value="ABP53687.1"/>
    <property type="molecule type" value="Genomic_DNA"/>
</dbReference>
<dbReference type="RefSeq" id="WP_011905119.1">
    <property type="nucleotide sequence ID" value="NC_009380.1"/>
</dbReference>
<dbReference type="SMR" id="A4X487"/>
<dbReference type="STRING" id="369723.Strop_1217"/>
<dbReference type="KEGG" id="stp:Strop_1217"/>
<dbReference type="PATRIC" id="fig|369723.5.peg.1240"/>
<dbReference type="eggNOG" id="COG0272">
    <property type="taxonomic scope" value="Bacteria"/>
</dbReference>
<dbReference type="HOGENOM" id="CLU_007764_2_0_11"/>
<dbReference type="Proteomes" id="UP000000235">
    <property type="component" value="Chromosome"/>
</dbReference>
<dbReference type="GO" id="GO:0005829">
    <property type="term" value="C:cytosol"/>
    <property type="evidence" value="ECO:0007669"/>
    <property type="project" value="TreeGrafter"/>
</dbReference>
<dbReference type="GO" id="GO:0003677">
    <property type="term" value="F:DNA binding"/>
    <property type="evidence" value="ECO:0007669"/>
    <property type="project" value="InterPro"/>
</dbReference>
<dbReference type="GO" id="GO:0003911">
    <property type="term" value="F:DNA ligase (NAD+) activity"/>
    <property type="evidence" value="ECO:0007669"/>
    <property type="project" value="UniProtKB-UniRule"/>
</dbReference>
<dbReference type="GO" id="GO:0046872">
    <property type="term" value="F:metal ion binding"/>
    <property type="evidence" value="ECO:0007669"/>
    <property type="project" value="UniProtKB-KW"/>
</dbReference>
<dbReference type="GO" id="GO:0006281">
    <property type="term" value="P:DNA repair"/>
    <property type="evidence" value="ECO:0007669"/>
    <property type="project" value="UniProtKB-KW"/>
</dbReference>
<dbReference type="GO" id="GO:0006260">
    <property type="term" value="P:DNA replication"/>
    <property type="evidence" value="ECO:0007669"/>
    <property type="project" value="UniProtKB-KW"/>
</dbReference>
<dbReference type="CDD" id="cd17748">
    <property type="entry name" value="BRCT_DNA_ligase_like"/>
    <property type="match status" value="1"/>
</dbReference>
<dbReference type="CDD" id="cd00114">
    <property type="entry name" value="LIGANc"/>
    <property type="match status" value="1"/>
</dbReference>
<dbReference type="FunFam" id="1.10.150.20:FF:000006">
    <property type="entry name" value="DNA ligase"/>
    <property type="match status" value="1"/>
</dbReference>
<dbReference type="FunFam" id="1.10.287.610:FF:000002">
    <property type="entry name" value="DNA ligase"/>
    <property type="match status" value="1"/>
</dbReference>
<dbReference type="FunFam" id="2.40.50.140:FF:000012">
    <property type="entry name" value="DNA ligase"/>
    <property type="match status" value="1"/>
</dbReference>
<dbReference type="FunFam" id="3.30.470.30:FF:000001">
    <property type="entry name" value="DNA ligase"/>
    <property type="match status" value="1"/>
</dbReference>
<dbReference type="FunFam" id="3.40.50.10190:FF:000054">
    <property type="entry name" value="DNA ligase"/>
    <property type="match status" value="1"/>
</dbReference>
<dbReference type="Gene3D" id="6.20.10.30">
    <property type="match status" value="1"/>
</dbReference>
<dbReference type="Gene3D" id="1.10.150.20">
    <property type="entry name" value="5' to 3' exonuclease, C-terminal subdomain"/>
    <property type="match status" value="2"/>
</dbReference>
<dbReference type="Gene3D" id="3.40.50.10190">
    <property type="entry name" value="BRCT domain"/>
    <property type="match status" value="1"/>
</dbReference>
<dbReference type="Gene3D" id="3.30.470.30">
    <property type="entry name" value="DNA ligase/mRNA capping enzyme"/>
    <property type="match status" value="1"/>
</dbReference>
<dbReference type="Gene3D" id="1.10.287.610">
    <property type="entry name" value="Helix hairpin bin"/>
    <property type="match status" value="1"/>
</dbReference>
<dbReference type="Gene3D" id="2.40.50.140">
    <property type="entry name" value="Nucleic acid-binding proteins"/>
    <property type="match status" value="1"/>
</dbReference>
<dbReference type="HAMAP" id="MF_01588">
    <property type="entry name" value="DNA_ligase_A"/>
    <property type="match status" value="1"/>
</dbReference>
<dbReference type="InterPro" id="IPR001357">
    <property type="entry name" value="BRCT_dom"/>
</dbReference>
<dbReference type="InterPro" id="IPR036420">
    <property type="entry name" value="BRCT_dom_sf"/>
</dbReference>
<dbReference type="InterPro" id="IPR041663">
    <property type="entry name" value="DisA/LigA_HHH"/>
</dbReference>
<dbReference type="InterPro" id="IPR001679">
    <property type="entry name" value="DNA_ligase"/>
</dbReference>
<dbReference type="InterPro" id="IPR018239">
    <property type="entry name" value="DNA_ligase_AS"/>
</dbReference>
<dbReference type="InterPro" id="IPR033136">
    <property type="entry name" value="DNA_ligase_CS"/>
</dbReference>
<dbReference type="InterPro" id="IPR013839">
    <property type="entry name" value="DNAligase_adenylation"/>
</dbReference>
<dbReference type="InterPro" id="IPR013840">
    <property type="entry name" value="DNAligase_N"/>
</dbReference>
<dbReference type="InterPro" id="IPR003583">
    <property type="entry name" value="Hlx-hairpin-Hlx_DNA-bd_motif"/>
</dbReference>
<dbReference type="InterPro" id="IPR012340">
    <property type="entry name" value="NA-bd_OB-fold"/>
</dbReference>
<dbReference type="InterPro" id="IPR004150">
    <property type="entry name" value="NAD_DNA_ligase_OB"/>
</dbReference>
<dbReference type="InterPro" id="IPR010994">
    <property type="entry name" value="RuvA_2-like"/>
</dbReference>
<dbReference type="InterPro" id="IPR004149">
    <property type="entry name" value="Znf_DNAligase_C4"/>
</dbReference>
<dbReference type="NCBIfam" id="TIGR00575">
    <property type="entry name" value="dnlj"/>
    <property type="match status" value="1"/>
</dbReference>
<dbReference type="NCBIfam" id="NF005932">
    <property type="entry name" value="PRK07956.1"/>
    <property type="match status" value="1"/>
</dbReference>
<dbReference type="PANTHER" id="PTHR23389">
    <property type="entry name" value="CHROMOSOME TRANSMISSION FIDELITY FACTOR 18"/>
    <property type="match status" value="1"/>
</dbReference>
<dbReference type="PANTHER" id="PTHR23389:SF9">
    <property type="entry name" value="DNA LIGASE"/>
    <property type="match status" value="1"/>
</dbReference>
<dbReference type="Pfam" id="PF00533">
    <property type="entry name" value="BRCT"/>
    <property type="match status" value="1"/>
</dbReference>
<dbReference type="Pfam" id="PF01653">
    <property type="entry name" value="DNA_ligase_aden"/>
    <property type="match status" value="1"/>
</dbReference>
<dbReference type="Pfam" id="PF03120">
    <property type="entry name" value="DNA_ligase_OB"/>
    <property type="match status" value="1"/>
</dbReference>
<dbReference type="Pfam" id="PF03119">
    <property type="entry name" value="DNA_ligase_ZBD"/>
    <property type="match status" value="1"/>
</dbReference>
<dbReference type="Pfam" id="PF12826">
    <property type="entry name" value="HHH_2"/>
    <property type="match status" value="1"/>
</dbReference>
<dbReference type="Pfam" id="PF22745">
    <property type="entry name" value="Nlig-Ia"/>
    <property type="match status" value="1"/>
</dbReference>
<dbReference type="PIRSF" id="PIRSF001604">
    <property type="entry name" value="LigA"/>
    <property type="match status" value="1"/>
</dbReference>
<dbReference type="SMART" id="SM00292">
    <property type="entry name" value="BRCT"/>
    <property type="match status" value="1"/>
</dbReference>
<dbReference type="SMART" id="SM00278">
    <property type="entry name" value="HhH1"/>
    <property type="match status" value="2"/>
</dbReference>
<dbReference type="SMART" id="SM00532">
    <property type="entry name" value="LIGANc"/>
    <property type="match status" value="1"/>
</dbReference>
<dbReference type="SUPFAM" id="SSF52113">
    <property type="entry name" value="BRCT domain"/>
    <property type="match status" value="1"/>
</dbReference>
<dbReference type="SUPFAM" id="SSF56091">
    <property type="entry name" value="DNA ligase/mRNA capping enzyme, catalytic domain"/>
    <property type="match status" value="1"/>
</dbReference>
<dbReference type="SUPFAM" id="SSF50249">
    <property type="entry name" value="Nucleic acid-binding proteins"/>
    <property type="match status" value="1"/>
</dbReference>
<dbReference type="SUPFAM" id="SSF47781">
    <property type="entry name" value="RuvA domain 2-like"/>
    <property type="match status" value="1"/>
</dbReference>
<dbReference type="PROSITE" id="PS50172">
    <property type="entry name" value="BRCT"/>
    <property type="match status" value="1"/>
</dbReference>
<dbReference type="PROSITE" id="PS01055">
    <property type="entry name" value="DNA_LIGASE_N1"/>
    <property type="match status" value="1"/>
</dbReference>
<dbReference type="PROSITE" id="PS01056">
    <property type="entry name" value="DNA_LIGASE_N2"/>
    <property type="match status" value="1"/>
</dbReference>
<feature type="chain" id="PRO_0000340376" description="DNA ligase">
    <location>
        <begin position="1"/>
        <end position="711"/>
    </location>
</feature>
<feature type="domain" description="BRCT" evidence="1">
    <location>
        <begin position="620"/>
        <end position="709"/>
    </location>
</feature>
<feature type="region of interest" description="Disordered" evidence="2">
    <location>
        <begin position="1"/>
        <end position="29"/>
    </location>
</feature>
<feature type="compositionally biased region" description="Low complexity" evidence="2">
    <location>
        <begin position="12"/>
        <end position="25"/>
    </location>
</feature>
<feature type="active site" description="N6-AMP-lysine intermediate" evidence="1">
    <location>
        <position position="135"/>
    </location>
</feature>
<feature type="binding site" evidence="1">
    <location>
        <begin position="54"/>
        <end position="58"/>
    </location>
    <ligand>
        <name>NAD(+)</name>
        <dbReference type="ChEBI" id="CHEBI:57540"/>
    </ligand>
</feature>
<feature type="binding site" evidence="1">
    <location>
        <begin position="103"/>
        <end position="104"/>
    </location>
    <ligand>
        <name>NAD(+)</name>
        <dbReference type="ChEBI" id="CHEBI:57540"/>
    </ligand>
</feature>
<feature type="binding site" evidence="1">
    <location>
        <position position="133"/>
    </location>
    <ligand>
        <name>NAD(+)</name>
        <dbReference type="ChEBI" id="CHEBI:57540"/>
    </ligand>
</feature>
<feature type="binding site" evidence="1">
    <location>
        <position position="156"/>
    </location>
    <ligand>
        <name>NAD(+)</name>
        <dbReference type="ChEBI" id="CHEBI:57540"/>
    </ligand>
</feature>
<feature type="binding site" evidence="1">
    <location>
        <position position="197"/>
    </location>
    <ligand>
        <name>NAD(+)</name>
        <dbReference type="ChEBI" id="CHEBI:57540"/>
    </ligand>
</feature>
<feature type="binding site" evidence="1">
    <location>
        <position position="313"/>
    </location>
    <ligand>
        <name>NAD(+)</name>
        <dbReference type="ChEBI" id="CHEBI:57540"/>
    </ligand>
</feature>
<feature type="binding site" evidence="1">
    <location>
        <position position="337"/>
    </location>
    <ligand>
        <name>NAD(+)</name>
        <dbReference type="ChEBI" id="CHEBI:57540"/>
    </ligand>
</feature>
<feature type="binding site" evidence="1">
    <location>
        <position position="431"/>
    </location>
    <ligand>
        <name>Zn(2+)</name>
        <dbReference type="ChEBI" id="CHEBI:29105"/>
    </ligand>
</feature>
<feature type="binding site" evidence="1">
    <location>
        <position position="434"/>
    </location>
    <ligand>
        <name>Zn(2+)</name>
        <dbReference type="ChEBI" id="CHEBI:29105"/>
    </ligand>
</feature>
<feature type="binding site" evidence="1">
    <location>
        <position position="450"/>
    </location>
    <ligand>
        <name>Zn(2+)</name>
        <dbReference type="ChEBI" id="CHEBI:29105"/>
    </ligand>
</feature>
<feature type="binding site" evidence="1">
    <location>
        <position position="456"/>
    </location>
    <ligand>
        <name>Zn(2+)</name>
        <dbReference type="ChEBI" id="CHEBI:29105"/>
    </ligand>
</feature>
<comment type="function">
    <text evidence="1">DNA ligase that catalyzes the formation of phosphodiester linkages between 5'-phosphoryl and 3'-hydroxyl groups in double-stranded DNA using NAD as a coenzyme and as the energy source for the reaction. It is essential for DNA replication and repair of damaged DNA.</text>
</comment>
<comment type="catalytic activity">
    <reaction evidence="1">
        <text>NAD(+) + (deoxyribonucleotide)n-3'-hydroxyl + 5'-phospho-(deoxyribonucleotide)m = (deoxyribonucleotide)n+m + AMP + beta-nicotinamide D-nucleotide.</text>
        <dbReference type="EC" id="6.5.1.2"/>
    </reaction>
</comment>
<comment type="cofactor">
    <cofactor evidence="1">
        <name>Mg(2+)</name>
        <dbReference type="ChEBI" id="CHEBI:18420"/>
    </cofactor>
    <cofactor evidence="1">
        <name>Mn(2+)</name>
        <dbReference type="ChEBI" id="CHEBI:29035"/>
    </cofactor>
</comment>
<comment type="similarity">
    <text evidence="1">Belongs to the NAD-dependent DNA ligase family. LigA subfamily.</text>
</comment>
<proteinExistence type="inferred from homology"/>
<organism>
    <name type="scientific">Salinispora tropica (strain ATCC BAA-916 / DSM 44818 / JCM 13857 / NBRC 105044 / CNB-440)</name>
    <dbReference type="NCBI Taxonomy" id="369723"/>
    <lineage>
        <taxon>Bacteria</taxon>
        <taxon>Bacillati</taxon>
        <taxon>Actinomycetota</taxon>
        <taxon>Actinomycetes</taxon>
        <taxon>Micromonosporales</taxon>
        <taxon>Micromonosporaceae</taxon>
        <taxon>Salinispora</taxon>
    </lineage>
</organism>
<reference key="1">
    <citation type="journal article" date="2007" name="Proc. Natl. Acad. Sci. U.S.A.">
        <title>Genome sequencing reveals complex secondary metabolome in the marine actinomycete Salinispora tropica.</title>
        <authorList>
            <person name="Udwary D.W."/>
            <person name="Zeigler L."/>
            <person name="Asolkar R.N."/>
            <person name="Singan V."/>
            <person name="Lapidus A."/>
            <person name="Fenical W."/>
            <person name="Jensen P.R."/>
            <person name="Moore B.S."/>
        </authorList>
    </citation>
    <scope>NUCLEOTIDE SEQUENCE [LARGE SCALE GENOMIC DNA]</scope>
    <source>
        <strain>ATCC BAA-916 / DSM 44818 / JCM 13857 / NBRC 105044 / CNB-440</strain>
    </source>
</reference>
<gene>
    <name evidence="1" type="primary">ligA</name>
    <name type="ordered locus">Strop_1217</name>
</gene>
<protein>
    <recommendedName>
        <fullName evidence="1">DNA ligase</fullName>
        <ecNumber evidence="1">6.5.1.2</ecNumber>
    </recommendedName>
    <alternativeName>
        <fullName evidence="1">Polydeoxyribonucleotide synthase [NAD(+)]</fullName>
    </alternativeName>
</protein>
<evidence type="ECO:0000255" key="1">
    <source>
        <dbReference type="HAMAP-Rule" id="MF_01588"/>
    </source>
</evidence>
<evidence type="ECO:0000256" key="2">
    <source>
        <dbReference type="SAM" id="MobiDB-lite"/>
    </source>
</evidence>